<accession>O31949</accession>
<feature type="chain" id="PRO_0000360542" description="SPbeta prophage-derived uncharacterized protein YonI">
    <location>
        <begin position="1"/>
        <end position="136"/>
    </location>
</feature>
<sequence>MENKVTLSDLVRKNIPVILKGSKHPLTEKELLEELAKKIPELVKNGEYRNGVLRGVLNKLSTQPVDRLGISREGNRVKYYFITDKKTELQNVIRNLISEIKEKELLTVDYLNDSPETIDFIKDVSTHVKDLEGFTR</sequence>
<gene>
    <name type="primary">yonI</name>
    <name type="ordered locus">BSU21080</name>
</gene>
<dbReference type="EMBL" id="AL009126">
    <property type="protein sequence ID" value="CAB14026.1"/>
    <property type="molecule type" value="Genomic_DNA"/>
</dbReference>
<dbReference type="RefSeq" id="NP_389991.1">
    <property type="nucleotide sequence ID" value="NC_000964.3"/>
</dbReference>
<dbReference type="RefSeq" id="WP_004399334.1">
    <property type="nucleotide sequence ID" value="NZ_OZ025638.1"/>
</dbReference>
<dbReference type="SMR" id="O31949"/>
<dbReference type="FunCoup" id="O31949">
    <property type="interactions" value="24"/>
</dbReference>
<dbReference type="STRING" id="224308.BSU21080"/>
<dbReference type="PaxDb" id="224308-BSU21080"/>
<dbReference type="EnsemblBacteria" id="CAB14026">
    <property type="protein sequence ID" value="CAB14026"/>
    <property type="gene ID" value="BSU_21080"/>
</dbReference>
<dbReference type="GeneID" id="939164"/>
<dbReference type="KEGG" id="bsu:BSU21080"/>
<dbReference type="PATRIC" id="fig|224308.179.peg.2302"/>
<dbReference type="InParanoid" id="O31949"/>
<dbReference type="OrthoDB" id="9883952at2"/>
<dbReference type="BioCyc" id="BSUB:BSU21080-MONOMER"/>
<dbReference type="Proteomes" id="UP000001570">
    <property type="component" value="Chromosome"/>
</dbReference>
<protein>
    <recommendedName>
        <fullName>SPbeta prophage-derived uncharacterized protein YonI</fullName>
    </recommendedName>
</protein>
<organism>
    <name type="scientific">Bacillus subtilis (strain 168)</name>
    <dbReference type="NCBI Taxonomy" id="224308"/>
    <lineage>
        <taxon>Bacteria</taxon>
        <taxon>Bacillati</taxon>
        <taxon>Bacillota</taxon>
        <taxon>Bacilli</taxon>
        <taxon>Bacillales</taxon>
        <taxon>Bacillaceae</taxon>
        <taxon>Bacillus</taxon>
    </lineage>
</organism>
<reference key="1">
    <citation type="journal article" date="1997" name="Nature">
        <title>The complete genome sequence of the Gram-positive bacterium Bacillus subtilis.</title>
        <authorList>
            <person name="Kunst F."/>
            <person name="Ogasawara N."/>
            <person name="Moszer I."/>
            <person name="Albertini A.M."/>
            <person name="Alloni G."/>
            <person name="Azevedo V."/>
            <person name="Bertero M.G."/>
            <person name="Bessieres P."/>
            <person name="Bolotin A."/>
            <person name="Borchert S."/>
            <person name="Borriss R."/>
            <person name="Boursier L."/>
            <person name="Brans A."/>
            <person name="Braun M."/>
            <person name="Brignell S.C."/>
            <person name="Bron S."/>
            <person name="Brouillet S."/>
            <person name="Bruschi C.V."/>
            <person name="Caldwell B."/>
            <person name="Capuano V."/>
            <person name="Carter N.M."/>
            <person name="Choi S.-K."/>
            <person name="Codani J.-J."/>
            <person name="Connerton I.F."/>
            <person name="Cummings N.J."/>
            <person name="Daniel R.A."/>
            <person name="Denizot F."/>
            <person name="Devine K.M."/>
            <person name="Duesterhoeft A."/>
            <person name="Ehrlich S.D."/>
            <person name="Emmerson P.T."/>
            <person name="Entian K.-D."/>
            <person name="Errington J."/>
            <person name="Fabret C."/>
            <person name="Ferrari E."/>
            <person name="Foulger D."/>
            <person name="Fritz C."/>
            <person name="Fujita M."/>
            <person name="Fujita Y."/>
            <person name="Fuma S."/>
            <person name="Galizzi A."/>
            <person name="Galleron N."/>
            <person name="Ghim S.-Y."/>
            <person name="Glaser P."/>
            <person name="Goffeau A."/>
            <person name="Golightly E.J."/>
            <person name="Grandi G."/>
            <person name="Guiseppi G."/>
            <person name="Guy B.J."/>
            <person name="Haga K."/>
            <person name="Haiech J."/>
            <person name="Harwood C.R."/>
            <person name="Henaut A."/>
            <person name="Hilbert H."/>
            <person name="Holsappel S."/>
            <person name="Hosono S."/>
            <person name="Hullo M.-F."/>
            <person name="Itaya M."/>
            <person name="Jones L.-M."/>
            <person name="Joris B."/>
            <person name="Karamata D."/>
            <person name="Kasahara Y."/>
            <person name="Klaerr-Blanchard M."/>
            <person name="Klein C."/>
            <person name="Kobayashi Y."/>
            <person name="Koetter P."/>
            <person name="Koningstein G."/>
            <person name="Krogh S."/>
            <person name="Kumano M."/>
            <person name="Kurita K."/>
            <person name="Lapidus A."/>
            <person name="Lardinois S."/>
            <person name="Lauber J."/>
            <person name="Lazarevic V."/>
            <person name="Lee S.-M."/>
            <person name="Levine A."/>
            <person name="Liu H."/>
            <person name="Masuda S."/>
            <person name="Mauel C."/>
            <person name="Medigue C."/>
            <person name="Medina N."/>
            <person name="Mellado R.P."/>
            <person name="Mizuno M."/>
            <person name="Moestl D."/>
            <person name="Nakai S."/>
            <person name="Noback M."/>
            <person name="Noone D."/>
            <person name="O'Reilly M."/>
            <person name="Ogawa K."/>
            <person name="Ogiwara A."/>
            <person name="Oudega B."/>
            <person name="Park S.-H."/>
            <person name="Parro V."/>
            <person name="Pohl T.M."/>
            <person name="Portetelle D."/>
            <person name="Porwollik S."/>
            <person name="Prescott A.M."/>
            <person name="Presecan E."/>
            <person name="Pujic P."/>
            <person name="Purnelle B."/>
            <person name="Rapoport G."/>
            <person name="Rey M."/>
            <person name="Reynolds S."/>
            <person name="Rieger M."/>
            <person name="Rivolta C."/>
            <person name="Rocha E."/>
            <person name="Roche B."/>
            <person name="Rose M."/>
            <person name="Sadaie Y."/>
            <person name="Sato T."/>
            <person name="Scanlan E."/>
            <person name="Schleich S."/>
            <person name="Schroeter R."/>
            <person name="Scoffone F."/>
            <person name="Sekiguchi J."/>
            <person name="Sekowska A."/>
            <person name="Seror S.J."/>
            <person name="Serror P."/>
            <person name="Shin B.-S."/>
            <person name="Soldo B."/>
            <person name="Sorokin A."/>
            <person name="Tacconi E."/>
            <person name="Takagi T."/>
            <person name="Takahashi H."/>
            <person name="Takemaru K."/>
            <person name="Takeuchi M."/>
            <person name="Tamakoshi A."/>
            <person name="Tanaka T."/>
            <person name="Terpstra P."/>
            <person name="Tognoni A."/>
            <person name="Tosato V."/>
            <person name="Uchiyama S."/>
            <person name="Vandenbol M."/>
            <person name="Vannier F."/>
            <person name="Vassarotti A."/>
            <person name="Viari A."/>
            <person name="Wambutt R."/>
            <person name="Wedler E."/>
            <person name="Wedler H."/>
            <person name="Weitzenegger T."/>
            <person name="Winters P."/>
            <person name="Wipat A."/>
            <person name="Yamamoto H."/>
            <person name="Yamane K."/>
            <person name="Yasumoto K."/>
            <person name="Yata K."/>
            <person name="Yoshida K."/>
            <person name="Yoshikawa H.-F."/>
            <person name="Zumstein E."/>
            <person name="Yoshikawa H."/>
            <person name="Danchin A."/>
        </authorList>
    </citation>
    <scope>NUCLEOTIDE SEQUENCE [LARGE SCALE GENOMIC DNA]</scope>
    <source>
        <strain>168</strain>
    </source>
</reference>
<keyword id="KW-1185">Reference proteome</keyword>
<proteinExistence type="predicted"/>
<name>YONI_BACSU</name>